<proteinExistence type="inferred from homology"/>
<evidence type="ECO:0000255" key="1">
    <source>
        <dbReference type="HAMAP-Rule" id="MF_01306"/>
    </source>
</evidence>
<evidence type="ECO:0000305" key="2"/>
<comment type="function">
    <text evidence="1">One of the primary rRNA binding proteins, it binds directly to 16S rRNA where it nucleates assembly of the body of the 30S subunit.</text>
</comment>
<comment type="function">
    <text evidence="1">With S5 and S12 plays an important role in translational accuracy.</text>
</comment>
<comment type="subunit">
    <text evidence="1">Part of the 30S ribosomal subunit. Contacts protein S5. The interaction surface between S4 and S5 is involved in control of translational fidelity.</text>
</comment>
<comment type="similarity">
    <text evidence="1">Belongs to the universal ribosomal protein uS4 family.</text>
</comment>
<name>RS4_NEIG1</name>
<sequence>MARYIGPKCKLARREGTDLFLKSARRSLDSKCKIDSAPGQHGAKKPRLSDYGLQLREKQKIRRIYGVLERQFRRYFAEADRRKGSTGELLLQLLESRLDNVVYRMGFGSTRAEARQLVSHKAIVVNGQVVNIPSFQVKAGDVVSVREKAKKQVRIQEALGLATQIGLPGWVSVDADKLEGVFKNMPDRSELTGDINEQLVVEFYSK</sequence>
<feature type="chain" id="PRO_0000228904" description="Small ribosomal subunit protein uS4">
    <location>
        <begin position="1"/>
        <end position="206"/>
    </location>
</feature>
<feature type="domain" description="S4 RNA-binding" evidence="1">
    <location>
        <begin position="96"/>
        <end position="157"/>
    </location>
</feature>
<reference key="1">
    <citation type="submission" date="2003-03" db="EMBL/GenBank/DDBJ databases">
        <title>The complete genome sequence of Neisseria gonorrhoeae.</title>
        <authorList>
            <person name="Lewis L.A."/>
            <person name="Gillaspy A.F."/>
            <person name="McLaughlin R.E."/>
            <person name="Gipson M."/>
            <person name="Ducey T.F."/>
            <person name="Ownbey T."/>
            <person name="Hartman K."/>
            <person name="Nydick C."/>
            <person name="Carson M.B."/>
            <person name="Vaughn J."/>
            <person name="Thomson C."/>
            <person name="Song L."/>
            <person name="Lin S."/>
            <person name="Yuan X."/>
            <person name="Najar F."/>
            <person name="Zhan M."/>
            <person name="Ren Q."/>
            <person name="Zhu H."/>
            <person name="Qi S."/>
            <person name="Kenton S.M."/>
            <person name="Lai H."/>
            <person name="White J.D."/>
            <person name="Clifton S."/>
            <person name="Roe B.A."/>
            <person name="Dyer D.W."/>
        </authorList>
    </citation>
    <scope>NUCLEOTIDE SEQUENCE [LARGE SCALE GENOMIC DNA]</scope>
    <source>
        <strain>ATCC 700825 / FA 1090</strain>
    </source>
</reference>
<dbReference type="EMBL" id="AE004969">
    <property type="protein sequence ID" value="AAW90436.1"/>
    <property type="molecule type" value="Genomic_DNA"/>
</dbReference>
<dbReference type="RefSeq" id="WP_002215455.1">
    <property type="nucleotide sequence ID" value="NC_002946.2"/>
</dbReference>
<dbReference type="RefSeq" id="YP_208848.1">
    <property type="nucleotide sequence ID" value="NC_002946.2"/>
</dbReference>
<dbReference type="SMR" id="Q5F5V1"/>
<dbReference type="STRING" id="242231.NGO_1819"/>
<dbReference type="GeneID" id="93387242"/>
<dbReference type="KEGG" id="ngo:NGO_1819"/>
<dbReference type="PATRIC" id="fig|242231.10.peg.2184"/>
<dbReference type="HOGENOM" id="CLU_092403_0_2_4"/>
<dbReference type="Proteomes" id="UP000000535">
    <property type="component" value="Chromosome"/>
</dbReference>
<dbReference type="GO" id="GO:0015935">
    <property type="term" value="C:small ribosomal subunit"/>
    <property type="evidence" value="ECO:0007669"/>
    <property type="project" value="InterPro"/>
</dbReference>
<dbReference type="GO" id="GO:0019843">
    <property type="term" value="F:rRNA binding"/>
    <property type="evidence" value="ECO:0007669"/>
    <property type="project" value="UniProtKB-UniRule"/>
</dbReference>
<dbReference type="GO" id="GO:0003735">
    <property type="term" value="F:structural constituent of ribosome"/>
    <property type="evidence" value="ECO:0007669"/>
    <property type="project" value="InterPro"/>
</dbReference>
<dbReference type="GO" id="GO:0042274">
    <property type="term" value="P:ribosomal small subunit biogenesis"/>
    <property type="evidence" value="ECO:0007669"/>
    <property type="project" value="TreeGrafter"/>
</dbReference>
<dbReference type="GO" id="GO:0006412">
    <property type="term" value="P:translation"/>
    <property type="evidence" value="ECO:0007669"/>
    <property type="project" value="UniProtKB-UniRule"/>
</dbReference>
<dbReference type="CDD" id="cd00165">
    <property type="entry name" value="S4"/>
    <property type="match status" value="1"/>
</dbReference>
<dbReference type="FunFam" id="1.10.1050.10:FF:000001">
    <property type="entry name" value="30S ribosomal protein S4"/>
    <property type="match status" value="1"/>
</dbReference>
<dbReference type="FunFam" id="3.10.290.10:FF:000001">
    <property type="entry name" value="30S ribosomal protein S4"/>
    <property type="match status" value="1"/>
</dbReference>
<dbReference type="Gene3D" id="1.10.1050.10">
    <property type="entry name" value="Ribosomal Protein S4 Delta 41, Chain A, domain 1"/>
    <property type="match status" value="1"/>
</dbReference>
<dbReference type="Gene3D" id="3.10.290.10">
    <property type="entry name" value="RNA-binding S4 domain"/>
    <property type="match status" value="1"/>
</dbReference>
<dbReference type="HAMAP" id="MF_01306_B">
    <property type="entry name" value="Ribosomal_uS4_B"/>
    <property type="match status" value="1"/>
</dbReference>
<dbReference type="InterPro" id="IPR022801">
    <property type="entry name" value="Ribosomal_uS4"/>
</dbReference>
<dbReference type="InterPro" id="IPR005709">
    <property type="entry name" value="Ribosomal_uS4_bac-type"/>
</dbReference>
<dbReference type="InterPro" id="IPR018079">
    <property type="entry name" value="Ribosomal_uS4_CS"/>
</dbReference>
<dbReference type="InterPro" id="IPR001912">
    <property type="entry name" value="Ribosomal_uS4_N"/>
</dbReference>
<dbReference type="InterPro" id="IPR002942">
    <property type="entry name" value="S4_RNA-bd"/>
</dbReference>
<dbReference type="InterPro" id="IPR036986">
    <property type="entry name" value="S4_RNA-bd_sf"/>
</dbReference>
<dbReference type="NCBIfam" id="NF003717">
    <property type="entry name" value="PRK05327.1"/>
    <property type="match status" value="1"/>
</dbReference>
<dbReference type="NCBIfam" id="TIGR01017">
    <property type="entry name" value="rpsD_bact"/>
    <property type="match status" value="1"/>
</dbReference>
<dbReference type="PANTHER" id="PTHR11831">
    <property type="entry name" value="30S 40S RIBOSOMAL PROTEIN"/>
    <property type="match status" value="1"/>
</dbReference>
<dbReference type="PANTHER" id="PTHR11831:SF4">
    <property type="entry name" value="SMALL RIBOSOMAL SUBUNIT PROTEIN US4M"/>
    <property type="match status" value="1"/>
</dbReference>
<dbReference type="Pfam" id="PF00163">
    <property type="entry name" value="Ribosomal_S4"/>
    <property type="match status" value="1"/>
</dbReference>
<dbReference type="Pfam" id="PF01479">
    <property type="entry name" value="S4"/>
    <property type="match status" value="1"/>
</dbReference>
<dbReference type="SMART" id="SM01390">
    <property type="entry name" value="Ribosomal_S4"/>
    <property type="match status" value="1"/>
</dbReference>
<dbReference type="SMART" id="SM00363">
    <property type="entry name" value="S4"/>
    <property type="match status" value="1"/>
</dbReference>
<dbReference type="SUPFAM" id="SSF55174">
    <property type="entry name" value="Alpha-L RNA-binding motif"/>
    <property type="match status" value="1"/>
</dbReference>
<dbReference type="PROSITE" id="PS00632">
    <property type="entry name" value="RIBOSOMAL_S4"/>
    <property type="match status" value="1"/>
</dbReference>
<dbReference type="PROSITE" id="PS50889">
    <property type="entry name" value="S4"/>
    <property type="match status" value="1"/>
</dbReference>
<keyword id="KW-1185">Reference proteome</keyword>
<keyword id="KW-0687">Ribonucleoprotein</keyword>
<keyword id="KW-0689">Ribosomal protein</keyword>
<keyword id="KW-0694">RNA-binding</keyword>
<keyword id="KW-0699">rRNA-binding</keyword>
<protein>
    <recommendedName>
        <fullName evidence="1">Small ribosomal subunit protein uS4</fullName>
    </recommendedName>
    <alternativeName>
        <fullName evidence="2">30S ribosomal protein S4</fullName>
    </alternativeName>
</protein>
<organism>
    <name type="scientific">Neisseria gonorrhoeae (strain ATCC 700825 / FA 1090)</name>
    <dbReference type="NCBI Taxonomy" id="242231"/>
    <lineage>
        <taxon>Bacteria</taxon>
        <taxon>Pseudomonadati</taxon>
        <taxon>Pseudomonadota</taxon>
        <taxon>Betaproteobacteria</taxon>
        <taxon>Neisseriales</taxon>
        <taxon>Neisseriaceae</taxon>
        <taxon>Neisseria</taxon>
    </lineage>
</organism>
<accession>Q5F5V1</accession>
<gene>
    <name evidence="1" type="primary">rpsD</name>
    <name type="ordered locus">NGO_1819</name>
</gene>